<reference key="1">
    <citation type="journal article" date="2003" name="Genome Res.">
        <title>Comparative complete genome sequence analysis of the amino acid replacements responsible for the thermostability of Corynebacterium efficiens.</title>
        <authorList>
            <person name="Nishio Y."/>
            <person name="Nakamura Y."/>
            <person name="Kawarabayasi Y."/>
            <person name="Usuda Y."/>
            <person name="Kimura E."/>
            <person name="Sugimoto S."/>
            <person name="Matsui K."/>
            <person name="Yamagishi A."/>
            <person name="Kikuchi H."/>
            <person name="Ikeo K."/>
            <person name="Gojobori T."/>
        </authorList>
    </citation>
    <scope>NUCLEOTIDE SEQUENCE [LARGE SCALE GENOMIC DNA]</scope>
    <source>
        <strain>DSM 44549 / YS-314 / AJ 12310 / JCM 11189 / NBRC 100395</strain>
    </source>
</reference>
<organism>
    <name type="scientific">Corynebacterium efficiens (strain DSM 44549 / YS-314 / AJ 12310 / JCM 11189 / NBRC 100395)</name>
    <dbReference type="NCBI Taxonomy" id="196164"/>
    <lineage>
        <taxon>Bacteria</taxon>
        <taxon>Bacillati</taxon>
        <taxon>Actinomycetota</taxon>
        <taxon>Actinomycetes</taxon>
        <taxon>Mycobacteriales</taxon>
        <taxon>Corynebacteriaceae</taxon>
        <taxon>Corynebacterium</taxon>
    </lineage>
</organism>
<accession>Q8FMN2</accession>
<protein>
    <recommendedName>
        <fullName evidence="3">Ferric nitrobindin-like protein</fullName>
    </recommendedName>
</protein>
<name>NBLIK_COREF</name>
<proteinExistence type="inferred from homology"/>
<sequence>MSENETSKTGGNAGVPGSGADAPSLSDSPAISGNDAVNLAAEQAKNTAHRNIPTLDDLPIPEDTANLRLGPNLHDGLLALLPLVGVWRGEGQADTPEGGQYSFGQQIIFSHDGENYLSFESRVWRLDSEGGTVGPDQRETGFWRINLQDEIEFVCAHASGVVEIYYGQPINERAWELESASTMVTATGPVTLGPGKRLYGLLPTNELGWVDERLVDKELKPRMSAQLHRIIG</sequence>
<gene>
    <name type="ordered locus">CE2471</name>
</gene>
<comment type="similarity">
    <text evidence="1">Belongs to the nitrobindin family.</text>
</comment>
<comment type="caution">
    <text evidence="3">Lacks the conserved His residue that binds heme iron in the nitrobindin family.</text>
</comment>
<keyword id="KW-1185">Reference proteome</keyword>
<evidence type="ECO:0000255" key="1">
    <source>
        <dbReference type="HAMAP-Rule" id="MF_01297"/>
    </source>
</evidence>
<evidence type="ECO:0000256" key="2">
    <source>
        <dbReference type="SAM" id="MobiDB-lite"/>
    </source>
</evidence>
<evidence type="ECO:0000305" key="3"/>
<dbReference type="EMBL" id="BA000035">
    <property type="protein sequence ID" value="BAC19281.1"/>
    <property type="molecule type" value="Genomic_DNA"/>
</dbReference>
<dbReference type="RefSeq" id="WP_006769171.1">
    <property type="nucleotide sequence ID" value="NC_004369.1"/>
</dbReference>
<dbReference type="SMR" id="Q8FMN2"/>
<dbReference type="STRING" id="196164.gene:10742917"/>
<dbReference type="KEGG" id="cef:CE2471"/>
<dbReference type="eggNOG" id="COG4044">
    <property type="taxonomic scope" value="Bacteria"/>
</dbReference>
<dbReference type="HOGENOM" id="CLU_085483_0_0_11"/>
<dbReference type="OrthoDB" id="4804006at2"/>
<dbReference type="Proteomes" id="UP000001409">
    <property type="component" value="Chromosome"/>
</dbReference>
<dbReference type="CDD" id="cd07828">
    <property type="entry name" value="lipocalin_heme-bd-THAP4-like"/>
    <property type="match status" value="1"/>
</dbReference>
<dbReference type="Gene3D" id="2.40.128.20">
    <property type="match status" value="1"/>
</dbReference>
<dbReference type="HAMAP" id="MF_01297">
    <property type="entry name" value="nitrobindin"/>
    <property type="match status" value="1"/>
</dbReference>
<dbReference type="InterPro" id="IPR012674">
    <property type="entry name" value="Calycin"/>
</dbReference>
<dbReference type="InterPro" id="IPR022939">
    <property type="entry name" value="Nb(III)_bact/plant"/>
</dbReference>
<dbReference type="InterPro" id="IPR045165">
    <property type="entry name" value="Nitrobindin"/>
</dbReference>
<dbReference type="InterPro" id="IPR014878">
    <property type="entry name" value="THAP4-like_heme-bd"/>
</dbReference>
<dbReference type="PANTHER" id="PTHR15854:SF4">
    <property type="entry name" value="PEROXYNITRITE ISOMERASE THAP4"/>
    <property type="match status" value="1"/>
</dbReference>
<dbReference type="PANTHER" id="PTHR15854">
    <property type="entry name" value="THAP4 PROTEIN"/>
    <property type="match status" value="1"/>
</dbReference>
<dbReference type="Pfam" id="PF08768">
    <property type="entry name" value="THAP4_heme-bd"/>
    <property type="match status" value="1"/>
</dbReference>
<dbReference type="SUPFAM" id="SSF50814">
    <property type="entry name" value="Lipocalins"/>
    <property type="match status" value="1"/>
</dbReference>
<feature type="chain" id="PRO_0000356900" description="Ferric nitrobindin-like protein">
    <location>
        <begin position="1"/>
        <end position="232"/>
    </location>
</feature>
<feature type="region of interest" description="Disordered" evidence="2">
    <location>
        <begin position="1"/>
        <end position="33"/>
    </location>
</feature>
<feature type="short sequence motif" description="GXWXGXG" evidence="1">
    <location>
        <begin position="85"/>
        <end position="91"/>
    </location>
</feature>
<feature type="compositionally biased region" description="Polar residues" evidence="2">
    <location>
        <begin position="1"/>
        <end position="10"/>
    </location>
</feature>